<organism>
    <name type="scientific">Mus musculus</name>
    <name type="common">Mouse</name>
    <dbReference type="NCBI Taxonomy" id="10090"/>
    <lineage>
        <taxon>Eukaryota</taxon>
        <taxon>Metazoa</taxon>
        <taxon>Chordata</taxon>
        <taxon>Craniata</taxon>
        <taxon>Vertebrata</taxon>
        <taxon>Euteleostomi</taxon>
        <taxon>Mammalia</taxon>
        <taxon>Eutheria</taxon>
        <taxon>Euarchontoglires</taxon>
        <taxon>Glires</taxon>
        <taxon>Rodentia</taxon>
        <taxon>Myomorpha</taxon>
        <taxon>Muroidea</taxon>
        <taxon>Muridae</taxon>
        <taxon>Murinae</taxon>
        <taxon>Mus</taxon>
        <taxon>Mus</taxon>
    </lineage>
</organism>
<evidence type="ECO:0000250" key="1"/>
<evidence type="ECO:0000250" key="2">
    <source>
        <dbReference type="UniProtKB" id="Q62848"/>
    </source>
</evidence>
<evidence type="ECO:0000250" key="3">
    <source>
        <dbReference type="UniProtKB" id="Q8N6T3"/>
    </source>
</evidence>
<evidence type="ECO:0000255" key="4">
    <source>
        <dbReference type="PROSITE-ProRule" id="PRU00288"/>
    </source>
</evidence>
<evidence type="ECO:0000256" key="5">
    <source>
        <dbReference type="SAM" id="MobiDB-lite"/>
    </source>
</evidence>
<evidence type="ECO:0000303" key="6">
    <source>
    </source>
</evidence>
<evidence type="ECO:0000305" key="7"/>
<evidence type="ECO:0007744" key="8">
    <source>
    </source>
</evidence>
<accession>Q9EPJ9</accession>
<accession>A8WIR9</accession>
<accession>A8WIS1</accession>
<accession>Q3TI52</accession>
<accession>Q8BMM6</accession>
<accession>Q8BMQ7</accession>
<comment type="function">
    <text evidence="1">GTPase-activating protein (GAP) for the ADP ribosylation factor 1 (ARF1). Involved in membrane trafficking and /or vesicle transport. Promotes hydrolysis of the ARF1-bound GTP and thus, is required for the dissociation of coat proteins from Golgi-derived membranes and vesicles, a prerequisite for vesicle's fusion with target compartment. Probably regulates ARF1-mediated transport via its interaction with the KDELR proteins and TMED2. Overexpression induces the redistribution of the entire Golgi complex to the endoplasmic reticulum, as when ARF1 is deactivated. Its activity is stimulated by phosphoinosides and inhibited by phosphatidylcholine (By similarity).</text>
</comment>
<comment type="subunit">
    <text evidence="1">Interacts with ARF1. Interacts with the COPI coat proteins, KDELR1 and TMED2. It is probably a component of the COPI coat protein complex. The interaction with TMED2 inhibits the GAP activity (By similarity).</text>
</comment>
<comment type="interaction">
    <interactant intactId="EBI-6288020">
        <id>Q9EPJ9</id>
    </interactant>
    <interactant intactId="EBI-2693710">
        <id>Q5S006</id>
        <label>Lrrk2</label>
    </interactant>
    <organismsDiffer>false</organismsDiffer>
    <experiments>3</experiments>
</comment>
<comment type="subcellular location">
    <subcellularLocation>
        <location evidence="1">Cytoplasm</location>
    </subcellularLocation>
    <subcellularLocation>
        <location evidence="1">Golgi apparatus</location>
    </subcellularLocation>
    <text evidence="1">Associates with the Golgi complex.</text>
</comment>
<comment type="alternative products">
    <event type="alternative splicing"/>
    <isoform>
        <id>Q9EPJ9-1</id>
        <name>1</name>
        <sequence type="displayed"/>
    </isoform>
    <isoform>
        <id>Q9EPJ9-2</id>
        <name>2</name>
        <sequence type="described" ref="VSP_011303"/>
    </isoform>
</comment>
<comment type="domain">
    <text evidence="1">The region downstream of Arf-GAP domain is essential to GAP activity in vivo. This region may be required for its targeting to Golgi membranes (By similarity).</text>
</comment>
<dbReference type="EMBL" id="AJ401461">
    <property type="protein sequence ID" value="CAC18721.1"/>
    <property type="molecule type" value="mRNA"/>
</dbReference>
<dbReference type="EMBL" id="AK030295">
    <property type="protein sequence ID" value="BAC26883.1"/>
    <property type="molecule type" value="mRNA"/>
</dbReference>
<dbReference type="EMBL" id="AK030520">
    <property type="protein sequence ID" value="BAC27002.1"/>
    <property type="molecule type" value="mRNA"/>
</dbReference>
<dbReference type="EMBL" id="AK145879">
    <property type="protein sequence ID" value="BAE26720.1"/>
    <property type="molecule type" value="mRNA"/>
</dbReference>
<dbReference type="EMBL" id="AK168007">
    <property type="protein sequence ID" value="BAE39994.1"/>
    <property type="molecule type" value="mRNA"/>
</dbReference>
<dbReference type="EMBL" id="BX649560">
    <property type="status" value="NOT_ANNOTATED_CDS"/>
    <property type="molecule type" value="Genomic_DNA"/>
</dbReference>
<dbReference type="CCDS" id="CCDS17190.1">
    <molecule id="Q9EPJ9-1"/>
</dbReference>
<dbReference type="CCDS" id="CCDS50843.1">
    <molecule id="Q9EPJ9-2"/>
</dbReference>
<dbReference type="RefSeq" id="NP_001171177.1">
    <molecule id="Q9EPJ9-2"/>
    <property type="nucleotide sequence ID" value="NM_001177706.2"/>
</dbReference>
<dbReference type="RefSeq" id="NP_001171178.1">
    <property type="nucleotide sequence ID" value="NM_001177707.1"/>
</dbReference>
<dbReference type="RefSeq" id="NP_001171179.1">
    <property type="nucleotide sequence ID" value="NM_001177708.1"/>
</dbReference>
<dbReference type="RefSeq" id="NP_001171180.1">
    <molecule id="Q9EPJ9-2"/>
    <property type="nucleotide sequence ID" value="NM_001177709.1"/>
</dbReference>
<dbReference type="RefSeq" id="NP_665703.2">
    <molecule id="Q9EPJ9-1"/>
    <property type="nucleotide sequence ID" value="NM_145760.3"/>
</dbReference>
<dbReference type="RefSeq" id="XP_017173503.1">
    <property type="nucleotide sequence ID" value="XM_017318014.1"/>
</dbReference>
<dbReference type="RefSeq" id="XP_030106704.1">
    <molecule id="Q9EPJ9-1"/>
    <property type="nucleotide sequence ID" value="XM_030250844.2"/>
</dbReference>
<dbReference type="RefSeq" id="XP_030106705.1">
    <molecule id="Q9EPJ9-1"/>
    <property type="nucleotide sequence ID" value="XM_030250845.2"/>
</dbReference>
<dbReference type="RefSeq" id="XP_030106710.1">
    <molecule id="Q9EPJ9-2"/>
    <property type="nucleotide sequence ID" value="XM_030250850.2"/>
</dbReference>
<dbReference type="RefSeq" id="XP_030106718.1">
    <molecule id="Q9EPJ9-2"/>
    <property type="nucleotide sequence ID" value="XM_030250858.2"/>
</dbReference>
<dbReference type="RefSeq" id="XP_036017629.1">
    <molecule id="Q9EPJ9-1"/>
    <property type="nucleotide sequence ID" value="XM_036161736.1"/>
</dbReference>
<dbReference type="SMR" id="Q9EPJ9"/>
<dbReference type="BioGRID" id="230805">
    <property type="interactions" value="17"/>
</dbReference>
<dbReference type="FunCoup" id="Q9EPJ9">
    <property type="interactions" value="2166"/>
</dbReference>
<dbReference type="IntAct" id="Q9EPJ9">
    <property type="interactions" value="1"/>
</dbReference>
<dbReference type="STRING" id="10090.ENSMUSP00000029092"/>
<dbReference type="GlyGen" id="Q9EPJ9">
    <property type="glycosylation" value="2 sites, 1 O-linked glycan (2 sites)"/>
</dbReference>
<dbReference type="iPTMnet" id="Q9EPJ9"/>
<dbReference type="PhosphoSitePlus" id="Q9EPJ9"/>
<dbReference type="SwissPalm" id="Q9EPJ9"/>
<dbReference type="jPOST" id="Q9EPJ9"/>
<dbReference type="PaxDb" id="10090-ENSMUSP00000029092"/>
<dbReference type="PeptideAtlas" id="Q9EPJ9"/>
<dbReference type="ProteomicsDB" id="277274">
    <molecule id="Q9EPJ9-1"/>
</dbReference>
<dbReference type="ProteomicsDB" id="277275">
    <molecule id="Q9EPJ9-2"/>
</dbReference>
<dbReference type="Pumba" id="Q9EPJ9"/>
<dbReference type="Antibodypedia" id="29683">
    <property type="antibodies" value="420 antibodies from 33 providers"/>
</dbReference>
<dbReference type="DNASU" id="228998"/>
<dbReference type="Ensembl" id="ENSMUST00000029092.13">
    <molecule id="Q9EPJ9-1"/>
    <property type="protein sequence ID" value="ENSMUSP00000029092.7"/>
    <property type="gene ID" value="ENSMUSG00000027575.20"/>
</dbReference>
<dbReference type="Ensembl" id="ENSMUST00000108859.8">
    <molecule id="Q9EPJ9-2"/>
    <property type="protein sequence ID" value="ENSMUSP00000104487.2"/>
    <property type="gene ID" value="ENSMUSG00000027575.20"/>
</dbReference>
<dbReference type="Ensembl" id="ENSMUST00000108860.8">
    <molecule id="Q9EPJ9-2"/>
    <property type="protein sequence ID" value="ENSMUSP00000104488.2"/>
    <property type="gene ID" value="ENSMUSG00000027575.20"/>
</dbReference>
<dbReference type="GeneID" id="228998"/>
<dbReference type="KEGG" id="mmu:228998"/>
<dbReference type="UCSC" id="uc008okj.2">
    <molecule id="Q9EPJ9-1"/>
    <property type="organism name" value="mouse"/>
</dbReference>
<dbReference type="UCSC" id="uc008okm.2">
    <molecule id="Q9EPJ9-2"/>
    <property type="organism name" value="mouse"/>
</dbReference>
<dbReference type="AGR" id="MGI:2183559"/>
<dbReference type="CTD" id="55738"/>
<dbReference type="MGI" id="MGI:2183559">
    <property type="gene designation" value="Arfgap1"/>
</dbReference>
<dbReference type="VEuPathDB" id="HostDB:ENSMUSG00000027575"/>
<dbReference type="eggNOG" id="KOG0704">
    <property type="taxonomic scope" value="Eukaryota"/>
</dbReference>
<dbReference type="GeneTree" id="ENSGT00890000139515"/>
<dbReference type="InParanoid" id="Q9EPJ9"/>
<dbReference type="OMA" id="MSKLWEV"/>
<dbReference type="OrthoDB" id="983479at2759"/>
<dbReference type="PhylomeDB" id="Q9EPJ9"/>
<dbReference type="TreeFam" id="TF105931"/>
<dbReference type="Reactome" id="R-MMU-6807878">
    <property type="pathway name" value="COPI-mediated anterograde transport"/>
</dbReference>
<dbReference type="Reactome" id="R-MMU-6811434">
    <property type="pathway name" value="COPI-dependent Golgi-to-ER retrograde traffic"/>
</dbReference>
<dbReference type="Reactome" id="R-MMU-8856828">
    <property type="pathway name" value="Clathrin-mediated endocytosis"/>
</dbReference>
<dbReference type="BioGRID-ORCS" id="228998">
    <property type="hits" value="1 hit in 79 CRISPR screens"/>
</dbReference>
<dbReference type="ChiTaRS" id="Arfgap1">
    <property type="organism name" value="mouse"/>
</dbReference>
<dbReference type="PRO" id="PR:Q9EPJ9"/>
<dbReference type="Proteomes" id="UP000000589">
    <property type="component" value="Chromosome 2"/>
</dbReference>
<dbReference type="RNAct" id="Q9EPJ9">
    <property type="molecule type" value="protein"/>
</dbReference>
<dbReference type="Bgee" id="ENSMUSG00000027575">
    <property type="expression patterns" value="Expressed in humerus cartilage element and 266 other cell types or tissues"/>
</dbReference>
<dbReference type="ExpressionAtlas" id="Q9EPJ9">
    <property type="expression patterns" value="baseline and differential"/>
</dbReference>
<dbReference type="GO" id="GO:0005794">
    <property type="term" value="C:Golgi apparatus"/>
    <property type="evidence" value="ECO:0007669"/>
    <property type="project" value="UniProtKB-SubCell"/>
</dbReference>
<dbReference type="GO" id="GO:0014069">
    <property type="term" value="C:postsynaptic density"/>
    <property type="evidence" value="ECO:0000314"/>
    <property type="project" value="MGI"/>
</dbReference>
<dbReference type="GO" id="GO:0045202">
    <property type="term" value="C:synapse"/>
    <property type="evidence" value="ECO:0000314"/>
    <property type="project" value="MGI"/>
</dbReference>
<dbReference type="GO" id="GO:0005096">
    <property type="term" value="F:GTPase activator activity"/>
    <property type="evidence" value="ECO:0000266"/>
    <property type="project" value="MGI"/>
</dbReference>
<dbReference type="GO" id="GO:0008270">
    <property type="term" value="F:zinc ion binding"/>
    <property type="evidence" value="ECO:0007669"/>
    <property type="project" value="UniProtKB-KW"/>
</dbReference>
<dbReference type="GO" id="GO:0015031">
    <property type="term" value="P:protein transport"/>
    <property type="evidence" value="ECO:0007669"/>
    <property type="project" value="UniProtKB-KW"/>
</dbReference>
<dbReference type="GO" id="GO:0030100">
    <property type="term" value="P:regulation of endocytosis"/>
    <property type="evidence" value="ECO:0000314"/>
    <property type="project" value="MGI"/>
</dbReference>
<dbReference type="GO" id="GO:0016192">
    <property type="term" value="P:vesicle-mediated transport"/>
    <property type="evidence" value="ECO:0007669"/>
    <property type="project" value="UniProtKB-KW"/>
</dbReference>
<dbReference type="CDD" id="cd08830">
    <property type="entry name" value="ArfGap_ArfGap1"/>
    <property type="match status" value="1"/>
</dbReference>
<dbReference type="FunFam" id="1.10.220.150:FF:000008">
    <property type="entry name" value="ADP-ribosylation factor GTPase activating protein 1"/>
    <property type="match status" value="1"/>
</dbReference>
<dbReference type="Gene3D" id="1.10.220.150">
    <property type="entry name" value="Arf GTPase activating protein"/>
    <property type="match status" value="1"/>
</dbReference>
<dbReference type="InterPro" id="IPR037278">
    <property type="entry name" value="ARFGAP/RecO"/>
</dbReference>
<dbReference type="InterPro" id="IPR001164">
    <property type="entry name" value="ArfGAP_dom"/>
</dbReference>
<dbReference type="InterPro" id="IPR038508">
    <property type="entry name" value="ArfGAP_dom_sf"/>
</dbReference>
<dbReference type="PANTHER" id="PTHR46395">
    <property type="entry name" value="ADP-RIBOSYLATION FACTOR GTPASE-ACTIVATING PROTEIN 1"/>
    <property type="match status" value="1"/>
</dbReference>
<dbReference type="PANTHER" id="PTHR46395:SF1">
    <property type="entry name" value="ADP-RIBOSYLATION FACTOR GTPASE-ACTIVATING PROTEIN 1"/>
    <property type="match status" value="1"/>
</dbReference>
<dbReference type="Pfam" id="PF01412">
    <property type="entry name" value="ArfGap"/>
    <property type="match status" value="1"/>
</dbReference>
<dbReference type="PRINTS" id="PR00405">
    <property type="entry name" value="REVINTRACTNG"/>
</dbReference>
<dbReference type="SMART" id="SM00105">
    <property type="entry name" value="ArfGap"/>
    <property type="match status" value="1"/>
</dbReference>
<dbReference type="SUPFAM" id="SSF57863">
    <property type="entry name" value="ArfGap/RecO-like zinc finger"/>
    <property type="match status" value="1"/>
</dbReference>
<dbReference type="PROSITE" id="PS50115">
    <property type="entry name" value="ARFGAP"/>
    <property type="match status" value="1"/>
</dbReference>
<protein>
    <recommendedName>
        <fullName>ADP-ribosylation factor GTPase-activating protein 1</fullName>
        <shortName>ARF GAP 1</shortName>
    </recommendedName>
    <alternativeName>
        <fullName>ADP-ribosylation factor 1 GTPase-activating protein</fullName>
        <shortName>ARF1 GAP</shortName>
    </alternativeName>
    <alternativeName>
        <fullName>ARF1-directed GTPase-activating protein</fullName>
    </alternativeName>
</protein>
<sequence>MASPRTRKVLKEVRAQDENNVCFECGAFNPQWVSVTYGIWICLECSGRHRGLGVHLSFVRSVTMDKWKDIELEKMKAGGNAKFREFLETQDDYEPSWSLQDKYSSRAAALFRDKVATLAEGKEWSLESSPAQNWTPPQPKTLQFTAHRASGQPQSAAASGDKAFEDWLNDDLGSYQGAQENRYVGFGNTVPPQKREDDFLNNAMSSLYSGWSSFTTGASKFASAAKEGATKFGSQASQKASELGHSLNENVLKPAQEKVKEGRIFDDVSSGVSQLASKVQGVGSKGWRDVTTFFSGKAEDSSDRPLEGHSYQNSSGDNSQNSNIDQSFWETFGSAEPPKAKSPSSDSWTCADASTGRRSSDSWDVWGSGSASNNKNSNSDGWESWEGASGEGRAKATKKAAPSTADEGWDNQNW</sequence>
<keyword id="KW-0007">Acetylation</keyword>
<keyword id="KW-0025">Alternative splicing</keyword>
<keyword id="KW-0963">Cytoplasm</keyword>
<keyword id="KW-0931">ER-Golgi transport</keyword>
<keyword id="KW-0333">Golgi apparatus</keyword>
<keyword id="KW-0343">GTPase activation</keyword>
<keyword id="KW-0479">Metal-binding</keyword>
<keyword id="KW-0597">Phosphoprotein</keyword>
<keyword id="KW-0653">Protein transport</keyword>
<keyword id="KW-1185">Reference proteome</keyword>
<keyword id="KW-0813">Transport</keyword>
<keyword id="KW-0862">Zinc</keyword>
<keyword id="KW-0863">Zinc-finger</keyword>
<gene>
    <name type="primary">Arfgap1</name>
    <name type="synonym">Arf1gap</name>
</gene>
<proteinExistence type="evidence at protein level"/>
<feature type="chain" id="PRO_0000074191" description="ADP-ribosylation factor GTPase-activating protein 1">
    <location>
        <begin position="1"/>
        <end position="414"/>
    </location>
</feature>
<feature type="domain" description="Arf-GAP" evidence="4">
    <location>
        <begin position="7"/>
        <end position="124"/>
    </location>
</feature>
<feature type="zinc finger region" description="C4-type" evidence="4">
    <location>
        <begin position="22"/>
        <end position="45"/>
    </location>
</feature>
<feature type="region of interest" description="Disordered" evidence="5">
    <location>
        <begin position="296"/>
        <end position="414"/>
    </location>
</feature>
<feature type="compositionally biased region" description="Basic and acidic residues" evidence="5">
    <location>
        <begin position="297"/>
        <end position="307"/>
    </location>
</feature>
<feature type="compositionally biased region" description="Low complexity" evidence="5">
    <location>
        <begin position="310"/>
        <end position="327"/>
    </location>
</feature>
<feature type="compositionally biased region" description="Low complexity" evidence="5">
    <location>
        <begin position="334"/>
        <end position="347"/>
    </location>
</feature>
<feature type="compositionally biased region" description="Low complexity" evidence="5">
    <location>
        <begin position="362"/>
        <end position="388"/>
    </location>
</feature>
<feature type="modified residue" description="Phosphothreonine" evidence="8">
    <location>
        <position position="135"/>
    </location>
</feature>
<feature type="modified residue" description="Phosphoserine" evidence="3">
    <location>
        <position position="150"/>
    </location>
</feature>
<feature type="modified residue" description="Phosphothreonine" evidence="3">
    <location>
        <position position="189"/>
    </location>
</feature>
<feature type="modified residue" description="N6-acetyllysine" evidence="3">
    <location>
        <position position="231"/>
    </location>
</feature>
<feature type="modified residue" description="Phosphoserine" evidence="3">
    <location>
        <position position="246"/>
    </location>
</feature>
<feature type="modified residue" description="Phosphoserine" evidence="8">
    <location>
        <position position="342"/>
    </location>
</feature>
<feature type="modified residue" description="Phosphoserine" evidence="8">
    <location>
        <position position="345"/>
    </location>
</feature>
<feature type="modified residue" description="Phosphoserine" evidence="8">
    <location>
        <position position="347"/>
    </location>
</feature>
<feature type="modified residue" description="Phosphothreonine" evidence="3">
    <location>
        <position position="349"/>
    </location>
</feature>
<feature type="modified residue" description="Phosphoserine" evidence="8">
    <location>
        <position position="360"/>
    </location>
</feature>
<feature type="modified residue" description="Phosphoserine" evidence="8">
    <location>
        <position position="362"/>
    </location>
</feature>
<feature type="modified residue" description="Phosphoserine" evidence="2">
    <location>
        <position position="379"/>
    </location>
</feature>
<feature type="splice variant" id="VSP_011303" description="In isoform 2." evidence="6">
    <location>
        <begin position="259"/>
        <end position="280"/>
    </location>
</feature>
<feature type="sequence conflict" description="In Ref. 1; CAC18721." evidence="7" ref="1">
    <original>R</original>
    <variation>K</variation>
    <location>
        <position position="112"/>
    </location>
</feature>
<feature type="sequence conflict" description="In Ref. 1; CAC18721." evidence="7" ref="1">
    <original>N</original>
    <variation>K</variation>
    <location>
        <position position="188"/>
    </location>
</feature>
<reference key="1">
    <citation type="submission" date="2000-08" db="EMBL/GenBank/DDBJ databases">
        <title>Cloning and functional characterisation of mouse ARF1GAP.</title>
        <authorList>
            <person name="Venkateswarlu K."/>
        </authorList>
    </citation>
    <scope>NUCLEOTIDE SEQUENCE [MRNA] (ISOFORM 1)</scope>
</reference>
<reference key="2">
    <citation type="journal article" date="2005" name="Science">
        <title>The transcriptional landscape of the mammalian genome.</title>
        <authorList>
            <person name="Carninci P."/>
            <person name="Kasukawa T."/>
            <person name="Katayama S."/>
            <person name="Gough J."/>
            <person name="Frith M.C."/>
            <person name="Maeda N."/>
            <person name="Oyama R."/>
            <person name="Ravasi T."/>
            <person name="Lenhard B."/>
            <person name="Wells C."/>
            <person name="Kodzius R."/>
            <person name="Shimokawa K."/>
            <person name="Bajic V.B."/>
            <person name="Brenner S.E."/>
            <person name="Batalov S."/>
            <person name="Forrest A.R."/>
            <person name="Zavolan M."/>
            <person name="Davis M.J."/>
            <person name="Wilming L.G."/>
            <person name="Aidinis V."/>
            <person name="Allen J.E."/>
            <person name="Ambesi-Impiombato A."/>
            <person name="Apweiler R."/>
            <person name="Aturaliya R.N."/>
            <person name="Bailey T.L."/>
            <person name="Bansal M."/>
            <person name="Baxter L."/>
            <person name="Beisel K.W."/>
            <person name="Bersano T."/>
            <person name="Bono H."/>
            <person name="Chalk A.M."/>
            <person name="Chiu K.P."/>
            <person name="Choudhary V."/>
            <person name="Christoffels A."/>
            <person name="Clutterbuck D.R."/>
            <person name="Crowe M.L."/>
            <person name="Dalla E."/>
            <person name="Dalrymple B.P."/>
            <person name="de Bono B."/>
            <person name="Della Gatta G."/>
            <person name="di Bernardo D."/>
            <person name="Down T."/>
            <person name="Engstrom P."/>
            <person name="Fagiolini M."/>
            <person name="Faulkner G."/>
            <person name="Fletcher C.F."/>
            <person name="Fukushima T."/>
            <person name="Furuno M."/>
            <person name="Futaki S."/>
            <person name="Gariboldi M."/>
            <person name="Georgii-Hemming P."/>
            <person name="Gingeras T.R."/>
            <person name="Gojobori T."/>
            <person name="Green R.E."/>
            <person name="Gustincich S."/>
            <person name="Harbers M."/>
            <person name="Hayashi Y."/>
            <person name="Hensch T.K."/>
            <person name="Hirokawa N."/>
            <person name="Hill D."/>
            <person name="Huminiecki L."/>
            <person name="Iacono M."/>
            <person name="Ikeo K."/>
            <person name="Iwama A."/>
            <person name="Ishikawa T."/>
            <person name="Jakt M."/>
            <person name="Kanapin A."/>
            <person name="Katoh M."/>
            <person name="Kawasawa Y."/>
            <person name="Kelso J."/>
            <person name="Kitamura H."/>
            <person name="Kitano H."/>
            <person name="Kollias G."/>
            <person name="Krishnan S.P."/>
            <person name="Kruger A."/>
            <person name="Kummerfeld S.K."/>
            <person name="Kurochkin I.V."/>
            <person name="Lareau L.F."/>
            <person name="Lazarevic D."/>
            <person name="Lipovich L."/>
            <person name="Liu J."/>
            <person name="Liuni S."/>
            <person name="McWilliam S."/>
            <person name="Madan Babu M."/>
            <person name="Madera M."/>
            <person name="Marchionni L."/>
            <person name="Matsuda H."/>
            <person name="Matsuzawa S."/>
            <person name="Miki H."/>
            <person name="Mignone F."/>
            <person name="Miyake S."/>
            <person name="Morris K."/>
            <person name="Mottagui-Tabar S."/>
            <person name="Mulder N."/>
            <person name="Nakano N."/>
            <person name="Nakauchi H."/>
            <person name="Ng P."/>
            <person name="Nilsson R."/>
            <person name="Nishiguchi S."/>
            <person name="Nishikawa S."/>
            <person name="Nori F."/>
            <person name="Ohara O."/>
            <person name="Okazaki Y."/>
            <person name="Orlando V."/>
            <person name="Pang K.C."/>
            <person name="Pavan W.J."/>
            <person name="Pavesi G."/>
            <person name="Pesole G."/>
            <person name="Petrovsky N."/>
            <person name="Piazza S."/>
            <person name="Reed J."/>
            <person name="Reid J.F."/>
            <person name="Ring B.Z."/>
            <person name="Ringwald M."/>
            <person name="Rost B."/>
            <person name="Ruan Y."/>
            <person name="Salzberg S.L."/>
            <person name="Sandelin A."/>
            <person name="Schneider C."/>
            <person name="Schoenbach C."/>
            <person name="Sekiguchi K."/>
            <person name="Semple C.A."/>
            <person name="Seno S."/>
            <person name="Sessa L."/>
            <person name="Sheng Y."/>
            <person name="Shibata Y."/>
            <person name="Shimada H."/>
            <person name="Shimada K."/>
            <person name="Silva D."/>
            <person name="Sinclair B."/>
            <person name="Sperling S."/>
            <person name="Stupka E."/>
            <person name="Sugiura K."/>
            <person name="Sultana R."/>
            <person name="Takenaka Y."/>
            <person name="Taki K."/>
            <person name="Tammoja K."/>
            <person name="Tan S.L."/>
            <person name="Tang S."/>
            <person name="Taylor M.S."/>
            <person name="Tegner J."/>
            <person name="Teichmann S.A."/>
            <person name="Ueda H.R."/>
            <person name="van Nimwegen E."/>
            <person name="Verardo R."/>
            <person name="Wei C.L."/>
            <person name="Yagi K."/>
            <person name="Yamanishi H."/>
            <person name="Zabarovsky E."/>
            <person name="Zhu S."/>
            <person name="Zimmer A."/>
            <person name="Hide W."/>
            <person name="Bult C."/>
            <person name="Grimmond S.M."/>
            <person name="Teasdale R.D."/>
            <person name="Liu E.T."/>
            <person name="Brusic V."/>
            <person name="Quackenbush J."/>
            <person name="Wahlestedt C."/>
            <person name="Mattick J.S."/>
            <person name="Hume D.A."/>
            <person name="Kai C."/>
            <person name="Sasaki D."/>
            <person name="Tomaru Y."/>
            <person name="Fukuda S."/>
            <person name="Kanamori-Katayama M."/>
            <person name="Suzuki M."/>
            <person name="Aoki J."/>
            <person name="Arakawa T."/>
            <person name="Iida J."/>
            <person name="Imamura K."/>
            <person name="Itoh M."/>
            <person name="Kato T."/>
            <person name="Kawaji H."/>
            <person name="Kawagashira N."/>
            <person name="Kawashima T."/>
            <person name="Kojima M."/>
            <person name="Kondo S."/>
            <person name="Konno H."/>
            <person name="Nakano K."/>
            <person name="Ninomiya N."/>
            <person name="Nishio T."/>
            <person name="Okada M."/>
            <person name="Plessy C."/>
            <person name="Shibata K."/>
            <person name="Shiraki T."/>
            <person name="Suzuki S."/>
            <person name="Tagami M."/>
            <person name="Waki K."/>
            <person name="Watahiki A."/>
            <person name="Okamura-Oho Y."/>
            <person name="Suzuki H."/>
            <person name="Kawai J."/>
            <person name="Hayashizaki Y."/>
        </authorList>
    </citation>
    <scope>NUCLEOTIDE SEQUENCE [LARGE SCALE MRNA] (ISOFORMS 1 AND 2)</scope>
    <source>
        <strain>C57BL/6J</strain>
        <tissue>Ovary</tissue>
        <tissue>Pituitary</tissue>
        <tissue>Placenta</tissue>
        <tissue>Uterus</tissue>
    </source>
</reference>
<reference key="3">
    <citation type="journal article" date="2009" name="PLoS Biol.">
        <title>Lineage-specific biology revealed by a finished genome assembly of the mouse.</title>
        <authorList>
            <person name="Church D.M."/>
            <person name="Goodstadt L."/>
            <person name="Hillier L.W."/>
            <person name="Zody M.C."/>
            <person name="Goldstein S."/>
            <person name="She X."/>
            <person name="Bult C.J."/>
            <person name="Agarwala R."/>
            <person name="Cherry J.L."/>
            <person name="DiCuccio M."/>
            <person name="Hlavina W."/>
            <person name="Kapustin Y."/>
            <person name="Meric P."/>
            <person name="Maglott D."/>
            <person name="Birtle Z."/>
            <person name="Marques A.C."/>
            <person name="Graves T."/>
            <person name="Zhou S."/>
            <person name="Teague B."/>
            <person name="Potamousis K."/>
            <person name="Churas C."/>
            <person name="Place M."/>
            <person name="Herschleb J."/>
            <person name="Runnheim R."/>
            <person name="Forrest D."/>
            <person name="Amos-Landgraf J."/>
            <person name="Schwartz D.C."/>
            <person name="Cheng Z."/>
            <person name="Lindblad-Toh K."/>
            <person name="Eichler E.E."/>
            <person name="Ponting C.P."/>
        </authorList>
    </citation>
    <scope>NUCLEOTIDE SEQUENCE [LARGE SCALE GENOMIC DNA]</scope>
    <source>
        <strain>C57BL/6J</strain>
    </source>
</reference>
<reference key="4">
    <citation type="journal article" date="2007" name="Proc. Natl. Acad. Sci. U.S.A.">
        <title>Large-scale phosphorylation analysis of mouse liver.</title>
        <authorList>
            <person name="Villen J."/>
            <person name="Beausoleil S.A."/>
            <person name="Gerber S.A."/>
            <person name="Gygi S.P."/>
        </authorList>
    </citation>
    <scope>IDENTIFICATION BY MASS SPECTROMETRY [LARGE SCALE ANALYSIS]</scope>
    <source>
        <tissue>Liver</tissue>
    </source>
</reference>
<reference key="5">
    <citation type="journal article" date="2010" name="Cell">
        <title>A tissue-specific atlas of mouse protein phosphorylation and expression.</title>
        <authorList>
            <person name="Huttlin E.L."/>
            <person name="Jedrychowski M.P."/>
            <person name="Elias J.E."/>
            <person name="Goswami T."/>
            <person name="Rad R."/>
            <person name="Beausoleil S.A."/>
            <person name="Villen J."/>
            <person name="Haas W."/>
            <person name="Sowa M.E."/>
            <person name="Gygi S.P."/>
        </authorList>
    </citation>
    <scope>PHOSPHORYLATION [LARGE SCALE ANALYSIS] AT THR-135; SER-342; SER-345; SER-347; SER-360 AND SER-362</scope>
    <scope>IDENTIFICATION BY MASS SPECTROMETRY [LARGE SCALE ANALYSIS]</scope>
    <source>
        <tissue>Brain</tissue>
        <tissue>Brown adipose tissue</tissue>
        <tissue>Heart</tissue>
        <tissue>Kidney</tissue>
        <tissue>Liver</tissue>
        <tissue>Lung</tissue>
        <tissue>Pancreas</tissue>
        <tissue>Spleen</tissue>
        <tissue>Testis</tissue>
    </source>
</reference>
<name>ARFG1_MOUSE</name>